<evidence type="ECO:0000255" key="1">
    <source>
        <dbReference type="HAMAP-Rule" id="MF_00049"/>
    </source>
</evidence>
<feature type="chain" id="PRO_1000009342" description="Leucine--tRNA ligase">
    <location>
        <begin position="1"/>
        <end position="813"/>
    </location>
</feature>
<feature type="short sequence motif" description="'HIGH' region">
    <location>
        <begin position="41"/>
        <end position="51"/>
    </location>
</feature>
<feature type="short sequence motif" description="'KMSKS' region">
    <location>
        <begin position="575"/>
        <end position="579"/>
    </location>
</feature>
<feature type="binding site" evidence="1">
    <location>
        <position position="578"/>
    </location>
    <ligand>
        <name>ATP</name>
        <dbReference type="ChEBI" id="CHEBI:30616"/>
    </ligand>
</feature>
<keyword id="KW-0030">Aminoacyl-tRNA synthetase</keyword>
<keyword id="KW-0067">ATP-binding</keyword>
<keyword id="KW-0963">Cytoplasm</keyword>
<keyword id="KW-0436">Ligase</keyword>
<keyword id="KW-0547">Nucleotide-binding</keyword>
<keyword id="KW-0648">Protein biosynthesis</keyword>
<keyword id="KW-1185">Reference proteome</keyword>
<comment type="catalytic activity">
    <reaction evidence="1">
        <text>tRNA(Leu) + L-leucine + ATP = L-leucyl-tRNA(Leu) + AMP + diphosphate</text>
        <dbReference type="Rhea" id="RHEA:11688"/>
        <dbReference type="Rhea" id="RHEA-COMP:9613"/>
        <dbReference type="Rhea" id="RHEA-COMP:9622"/>
        <dbReference type="ChEBI" id="CHEBI:30616"/>
        <dbReference type="ChEBI" id="CHEBI:33019"/>
        <dbReference type="ChEBI" id="CHEBI:57427"/>
        <dbReference type="ChEBI" id="CHEBI:78442"/>
        <dbReference type="ChEBI" id="CHEBI:78494"/>
        <dbReference type="ChEBI" id="CHEBI:456215"/>
        <dbReference type="EC" id="6.1.1.4"/>
    </reaction>
</comment>
<comment type="subcellular location">
    <subcellularLocation>
        <location evidence="1">Cytoplasm</location>
    </subcellularLocation>
</comment>
<comment type="similarity">
    <text evidence="1">Belongs to the class-I aminoacyl-tRNA synthetase family.</text>
</comment>
<dbReference type="EC" id="6.1.1.4" evidence="1"/>
<dbReference type="EMBL" id="AM233362">
    <property type="protein sequence ID" value="CAJ79651.1"/>
    <property type="molecule type" value="Genomic_DNA"/>
</dbReference>
<dbReference type="RefSeq" id="WP_003016304.1">
    <property type="nucleotide sequence ID" value="NZ_CP009694.1"/>
</dbReference>
<dbReference type="SMR" id="Q2A307"/>
<dbReference type="KEGG" id="ftl:FTL_1212"/>
<dbReference type="Proteomes" id="UP000001944">
    <property type="component" value="Chromosome"/>
</dbReference>
<dbReference type="GO" id="GO:0005829">
    <property type="term" value="C:cytosol"/>
    <property type="evidence" value="ECO:0007669"/>
    <property type="project" value="TreeGrafter"/>
</dbReference>
<dbReference type="GO" id="GO:0002161">
    <property type="term" value="F:aminoacyl-tRNA deacylase activity"/>
    <property type="evidence" value="ECO:0007669"/>
    <property type="project" value="InterPro"/>
</dbReference>
<dbReference type="GO" id="GO:0005524">
    <property type="term" value="F:ATP binding"/>
    <property type="evidence" value="ECO:0007669"/>
    <property type="project" value="UniProtKB-UniRule"/>
</dbReference>
<dbReference type="GO" id="GO:0004823">
    <property type="term" value="F:leucine-tRNA ligase activity"/>
    <property type="evidence" value="ECO:0007669"/>
    <property type="project" value="UniProtKB-UniRule"/>
</dbReference>
<dbReference type="GO" id="GO:0006429">
    <property type="term" value="P:leucyl-tRNA aminoacylation"/>
    <property type="evidence" value="ECO:0007669"/>
    <property type="project" value="UniProtKB-UniRule"/>
</dbReference>
<dbReference type="CDD" id="cd07958">
    <property type="entry name" value="Anticodon_Ia_Leu_BEm"/>
    <property type="match status" value="1"/>
</dbReference>
<dbReference type="CDD" id="cd00812">
    <property type="entry name" value="LeuRS_core"/>
    <property type="match status" value="1"/>
</dbReference>
<dbReference type="FunFam" id="1.10.730.10:FF:000002">
    <property type="entry name" value="Leucine--tRNA ligase"/>
    <property type="match status" value="1"/>
</dbReference>
<dbReference type="FunFam" id="3.10.20.590:FF:000001">
    <property type="entry name" value="Leucine--tRNA ligase"/>
    <property type="match status" value="1"/>
</dbReference>
<dbReference type="FunFam" id="3.40.50.620:FF:000056">
    <property type="entry name" value="Leucine--tRNA ligase"/>
    <property type="match status" value="1"/>
</dbReference>
<dbReference type="FunFam" id="3.40.50.620:FF:000395">
    <property type="entry name" value="Leucine--tRNA ligase"/>
    <property type="match status" value="1"/>
</dbReference>
<dbReference type="FunFam" id="3.90.740.10:FF:000012">
    <property type="entry name" value="Leucine--tRNA ligase"/>
    <property type="match status" value="1"/>
</dbReference>
<dbReference type="Gene3D" id="3.10.20.590">
    <property type="match status" value="1"/>
</dbReference>
<dbReference type="Gene3D" id="3.40.50.620">
    <property type="entry name" value="HUPs"/>
    <property type="match status" value="2"/>
</dbReference>
<dbReference type="Gene3D" id="1.10.730.10">
    <property type="entry name" value="Isoleucyl-tRNA Synthetase, Domain 1"/>
    <property type="match status" value="1"/>
</dbReference>
<dbReference type="HAMAP" id="MF_00049_B">
    <property type="entry name" value="Leu_tRNA_synth_B"/>
    <property type="match status" value="1"/>
</dbReference>
<dbReference type="InterPro" id="IPR001412">
    <property type="entry name" value="aa-tRNA-synth_I_CS"/>
</dbReference>
<dbReference type="InterPro" id="IPR002300">
    <property type="entry name" value="aa-tRNA-synth_Ia"/>
</dbReference>
<dbReference type="InterPro" id="IPR002302">
    <property type="entry name" value="Leu-tRNA-ligase"/>
</dbReference>
<dbReference type="InterPro" id="IPR025709">
    <property type="entry name" value="Leu_tRNA-synth_edit"/>
</dbReference>
<dbReference type="InterPro" id="IPR013155">
    <property type="entry name" value="M/V/L/I-tRNA-synth_anticd-bd"/>
</dbReference>
<dbReference type="InterPro" id="IPR015413">
    <property type="entry name" value="Methionyl/Leucyl_tRNA_Synth"/>
</dbReference>
<dbReference type="InterPro" id="IPR014729">
    <property type="entry name" value="Rossmann-like_a/b/a_fold"/>
</dbReference>
<dbReference type="InterPro" id="IPR009080">
    <property type="entry name" value="tRNAsynth_Ia_anticodon-bd"/>
</dbReference>
<dbReference type="InterPro" id="IPR009008">
    <property type="entry name" value="Val/Leu/Ile-tRNA-synth_edit"/>
</dbReference>
<dbReference type="NCBIfam" id="TIGR00396">
    <property type="entry name" value="leuS_bact"/>
    <property type="match status" value="1"/>
</dbReference>
<dbReference type="PANTHER" id="PTHR43740:SF2">
    <property type="entry name" value="LEUCINE--TRNA LIGASE, MITOCHONDRIAL"/>
    <property type="match status" value="1"/>
</dbReference>
<dbReference type="PANTHER" id="PTHR43740">
    <property type="entry name" value="LEUCYL-TRNA SYNTHETASE"/>
    <property type="match status" value="1"/>
</dbReference>
<dbReference type="Pfam" id="PF08264">
    <property type="entry name" value="Anticodon_1"/>
    <property type="match status" value="1"/>
</dbReference>
<dbReference type="Pfam" id="PF00133">
    <property type="entry name" value="tRNA-synt_1"/>
    <property type="match status" value="1"/>
</dbReference>
<dbReference type="Pfam" id="PF13603">
    <property type="entry name" value="tRNA-synt_1_2"/>
    <property type="match status" value="1"/>
</dbReference>
<dbReference type="Pfam" id="PF09334">
    <property type="entry name" value="tRNA-synt_1g"/>
    <property type="match status" value="1"/>
</dbReference>
<dbReference type="PRINTS" id="PR00985">
    <property type="entry name" value="TRNASYNTHLEU"/>
</dbReference>
<dbReference type="SUPFAM" id="SSF47323">
    <property type="entry name" value="Anticodon-binding domain of a subclass of class I aminoacyl-tRNA synthetases"/>
    <property type="match status" value="1"/>
</dbReference>
<dbReference type="SUPFAM" id="SSF52374">
    <property type="entry name" value="Nucleotidylyl transferase"/>
    <property type="match status" value="1"/>
</dbReference>
<dbReference type="SUPFAM" id="SSF50677">
    <property type="entry name" value="ValRS/IleRS/LeuRS editing domain"/>
    <property type="match status" value="1"/>
</dbReference>
<dbReference type="PROSITE" id="PS00178">
    <property type="entry name" value="AA_TRNA_LIGASE_I"/>
    <property type="match status" value="1"/>
</dbReference>
<proteinExistence type="inferred from homology"/>
<accession>Q2A307</accession>
<protein>
    <recommendedName>
        <fullName evidence="1">Leucine--tRNA ligase</fullName>
        <ecNumber evidence="1">6.1.1.4</ecNumber>
    </recommendedName>
    <alternativeName>
        <fullName evidence="1">Leucyl-tRNA synthetase</fullName>
        <shortName evidence="1">LeuRS</shortName>
    </alternativeName>
</protein>
<organism>
    <name type="scientific">Francisella tularensis subsp. holarctica (strain LVS)</name>
    <dbReference type="NCBI Taxonomy" id="376619"/>
    <lineage>
        <taxon>Bacteria</taxon>
        <taxon>Pseudomonadati</taxon>
        <taxon>Pseudomonadota</taxon>
        <taxon>Gammaproteobacteria</taxon>
        <taxon>Thiotrichales</taxon>
        <taxon>Francisellaceae</taxon>
        <taxon>Francisella</taxon>
    </lineage>
</organism>
<sequence length="813" mass="93406">MNEYNFSDIEKSTQEYWRKNDTFKTIEDNTKEKFYCLSMLPYPSGTLHMGHVRNYTIGDVIARYQKMQGKNVLHPMGWDAFGLPAENAAIKHKKSPYEWTKSNIAYMRSQFDSLGFSFDWSREIATCDEDYYKWEQWFFIQLYKKGLAYRKNSVVNWDPVDQTVLANEQVVDGRGWRSGALVEKKEIPQWFLKITDYADELLQDINKLDNWPEAVKTMQINWIGKSKGLTVKFKVKDSNQEIEVFTTRPDTLMGVNYLGIAPEHPLALKEAKSNSQLAAFIEECKKTSTMEADLATQEKKGFKTSIKVIHPISAETIDVWVANFVLMGYGSGAVMSVPAHDQRDWEFAQKYNIPLKQVIESNDNKLKIDLEKQAFTEKGILINSGEFDGLNFKNAYQAIKKYLTKQNKGYETTNFRIHDWGISRQRYWGCPIPMIHCDDCGAVPEKEENLPVRLPTDVALTEAGSPLKDIPEFINVACPECGKPAKRETDTFDTFFESSWYYARYTCPTSNQMLDQEANYWLPVDKYIGGIEHAIMHLLYARFFHKLMRDQGLVKSDEPFKNLLTQGMVLKDGAKMSKSKGNIVDPQELIDKYGADTVRLFSMFAASPEQSLEWSETGVEGANKFLRKVFNYAELNKVIFAKNITLESQKLTKEDKKARFEIHSNLKQAIFDFDKSQFNTVVSACMKILNTLNNYDNLSESVKVEGFSILLRILAPFTPHLCHYLWQQLNLGEDILHTSFPTVDNNALEKDEFLLVVQINGKLKAKLELDASLSSNQVEEVVLADEHVKSFIDNKQVVKVIYVPQKLINIVIK</sequence>
<reference key="1">
    <citation type="submission" date="2006-03" db="EMBL/GenBank/DDBJ databases">
        <title>Complete genome sequence of Francisella tularensis LVS (Live Vaccine Strain).</title>
        <authorList>
            <person name="Chain P."/>
            <person name="Larimer F."/>
            <person name="Land M."/>
            <person name="Stilwagen S."/>
            <person name="Larsson P."/>
            <person name="Bearden S."/>
            <person name="Chu M."/>
            <person name="Oyston P."/>
            <person name="Forsman M."/>
            <person name="Andersson S."/>
            <person name="Lindler L."/>
            <person name="Titball R."/>
            <person name="Garcia E."/>
        </authorList>
    </citation>
    <scope>NUCLEOTIDE SEQUENCE [LARGE SCALE GENOMIC DNA]</scope>
    <source>
        <strain>LVS</strain>
    </source>
</reference>
<name>SYL_FRATH</name>
<gene>
    <name evidence="1" type="primary">leuS</name>
    <name type="ordered locus">FTL_1212</name>
</gene>